<evidence type="ECO:0000255" key="1">
    <source>
        <dbReference type="HAMAP-Rule" id="MF_00333"/>
    </source>
</evidence>
<gene>
    <name evidence="1" type="primary">hemF</name>
    <name type="ordered locus">PMT9312_1674</name>
</gene>
<reference key="1">
    <citation type="journal article" date="2006" name="Science">
        <title>Genomic islands and the ecology and evolution of Prochlorococcus.</title>
        <authorList>
            <person name="Coleman M.L."/>
            <person name="Sullivan M.B."/>
            <person name="Martiny A.C."/>
            <person name="Steglich C."/>
            <person name="Barry K."/>
            <person name="Delong E.F."/>
            <person name="Chisholm S.W."/>
        </authorList>
    </citation>
    <scope>NUCLEOTIDE SEQUENCE [LARGE SCALE GENOMIC DNA]</scope>
    <source>
        <strain>MIT 9312</strain>
    </source>
</reference>
<organism>
    <name type="scientific">Prochlorococcus marinus (strain MIT 9312)</name>
    <dbReference type="NCBI Taxonomy" id="74546"/>
    <lineage>
        <taxon>Bacteria</taxon>
        <taxon>Bacillati</taxon>
        <taxon>Cyanobacteriota</taxon>
        <taxon>Cyanophyceae</taxon>
        <taxon>Synechococcales</taxon>
        <taxon>Prochlorococcaceae</taxon>
        <taxon>Prochlorococcus</taxon>
    </lineage>
</organism>
<name>HEM6_PROM9</name>
<keyword id="KW-0149">Chlorophyll biosynthesis</keyword>
<keyword id="KW-0963">Cytoplasm</keyword>
<keyword id="KW-0350">Heme biosynthesis</keyword>
<keyword id="KW-0479">Metal-binding</keyword>
<keyword id="KW-0560">Oxidoreductase</keyword>
<keyword id="KW-0627">Porphyrin biosynthesis</keyword>
<proteinExistence type="inferred from homology"/>
<sequence>MLKEPPKNSREKTKNLLLTLQDKICSGLENIDGKGKFTEESWLRDEGGGGRSRVLKNGSIFEQAGVNFSEVQGKELPQSIISQRPEAKGHEWFATGTSMVLHPKNPFIPTVHLNYRYFEAGPVWWFGGGADLTPFYPYLSDVRNFHKEHKKACEKVDKDLHKVFKPWCDEYFFLKHRNESRGIGGIFYDYQDGSGNIYRGNNQNGEASKVSENIGKSNLNWDNLFSLAENCGQAFLPSYLPIIEKRANKTYTSKEREFQLYRRGRYVEFNLVWDRGTIFGLQTNGRTESILMSLPPLARWEYGYKAKKGSREEFLTSIFTKPQDWLNDKDLENFCMENNIFD</sequence>
<comment type="function">
    <text evidence="1">Involved in the heme and chlorophyll biosynthesis. Catalyzes the aerobic oxidative decarboxylation of propionate groups of rings A and B of coproporphyrinogen-III to yield the vinyl groups in protoporphyrinogen-IX.</text>
</comment>
<comment type="catalytic activity">
    <reaction evidence="1">
        <text>coproporphyrinogen III + O2 + 2 H(+) = protoporphyrinogen IX + 2 CO2 + 2 H2O</text>
        <dbReference type="Rhea" id="RHEA:18257"/>
        <dbReference type="ChEBI" id="CHEBI:15377"/>
        <dbReference type="ChEBI" id="CHEBI:15378"/>
        <dbReference type="ChEBI" id="CHEBI:15379"/>
        <dbReference type="ChEBI" id="CHEBI:16526"/>
        <dbReference type="ChEBI" id="CHEBI:57307"/>
        <dbReference type="ChEBI" id="CHEBI:57309"/>
        <dbReference type="EC" id="1.3.3.3"/>
    </reaction>
</comment>
<comment type="cofactor">
    <cofactor evidence="1">
        <name>a divalent metal cation</name>
        <dbReference type="ChEBI" id="CHEBI:60240"/>
    </cofactor>
</comment>
<comment type="pathway">
    <text evidence="1">Porphyrin-containing compound metabolism; protoporphyrin-IX biosynthesis; protoporphyrinogen-IX from coproporphyrinogen-III (O2 route): step 1/1.</text>
</comment>
<comment type="subunit">
    <text evidence="1">Homodimer.</text>
</comment>
<comment type="subcellular location">
    <subcellularLocation>
        <location evidence="1">Cytoplasm</location>
    </subcellularLocation>
</comment>
<comment type="similarity">
    <text evidence="1">Belongs to the aerobic coproporphyrinogen-III oxidase family.</text>
</comment>
<dbReference type="EC" id="1.3.3.3" evidence="1"/>
<dbReference type="EMBL" id="CP000111">
    <property type="protein sequence ID" value="ABB50735.1"/>
    <property type="molecule type" value="Genomic_DNA"/>
</dbReference>
<dbReference type="RefSeq" id="WP_011377216.1">
    <property type="nucleotide sequence ID" value="NC_007577.1"/>
</dbReference>
<dbReference type="SMR" id="Q318G0"/>
<dbReference type="STRING" id="74546.PMT9312_1674"/>
<dbReference type="KEGG" id="pmi:PMT9312_1674"/>
<dbReference type="eggNOG" id="COG0408">
    <property type="taxonomic scope" value="Bacteria"/>
</dbReference>
<dbReference type="HOGENOM" id="CLU_026169_0_1_3"/>
<dbReference type="OrthoDB" id="9777553at2"/>
<dbReference type="UniPathway" id="UPA00251">
    <property type="reaction ID" value="UER00322"/>
</dbReference>
<dbReference type="Proteomes" id="UP000002715">
    <property type="component" value="Chromosome"/>
</dbReference>
<dbReference type="GO" id="GO:0005737">
    <property type="term" value="C:cytoplasm"/>
    <property type="evidence" value="ECO:0007669"/>
    <property type="project" value="UniProtKB-SubCell"/>
</dbReference>
<dbReference type="GO" id="GO:0004109">
    <property type="term" value="F:coproporphyrinogen oxidase activity"/>
    <property type="evidence" value="ECO:0007669"/>
    <property type="project" value="UniProtKB-UniRule"/>
</dbReference>
<dbReference type="GO" id="GO:0046872">
    <property type="term" value="F:metal ion binding"/>
    <property type="evidence" value="ECO:0007669"/>
    <property type="project" value="UniProtKB-KW"/>
</dbReference>
<dbReference type="GO" id="GO:0042803">
    <property type="term" value="F:protein homodimerization activity"/>
    <property type="evidence" value="ECO:0000250"/>
    <property type="project" value="UniProtKB"/>
</dbReference>
<dbReference type="GO" id="GO:0015995">
    <property type="term" value="P:chlorophyll biosynthetic process"/>
    <property type="evidence" value="ECO:0007669"/>
    <property type="project" value="UniProtKB-UniRule"/>
</dbReference>
<dbReference type="GO" id="GO:0006782">
    <property type="term" value="P:protoporphyrinogen IX biosynthetic process"/>
    <property type="evidence" value="ECO:0007669"/>
    <property type="project" value="UniProtKB-UniRule"/>
</dbReference>
<dbReference type="FunFam" id="3.40.1500.10:FF:000007">
    <property type="entry name" value="Oxygen-dependent coproporphyrinogen-III oxidase"/>
    <property type="match status" value="1"/>
</dbReference>
<dbReference type="Gene3D" id="3.40.1500.10">
    <property type="entry name" value="Coproporphyrinogen III oxidase, aerobic"/>
    <property type="match status" value="1"/>
</dbReference>
<dbReference type="HAMAP" id="MF_00333">
    <property type="entry name" value="Coprogen_oxidas"/>
    <property type="match status" value="1"/>
</dbReference>
<dbReference type="InterPro" id="IPR001260">
    <property type="entry name" value="Coprogen_oxidase_aer"/>
</dbReference>
<dbReference type="InterPro" id="IPR036406">
    <property type="entry name" value="Coprogen_oxidase_aer_sf"/>
</dbReference>
<dbReference type="InterPro" id="IPR018375">
    <property type="entry name" value="Coprogen_oxidase_CS"/>
</dbReference>
<dbReference type="NCBIfam" id="NF003727">
    <property type="entry name" value="PRK05330.1"/>
    <property type="match status" value="1"/>
</dbReference>
<dbReference type="PANTHER" id="PTHR10755">
    <property type="entry name" value="COPROPORPHYRINOGEN III OXIDASE, MITOCHONDRIAL"/>
    <property type="match status" value="1"/>
</dbReference>
<dbReference type="PANTHER" id="PTHR10755:SF0">
    <property type="entry name" value="OXYGEN-DEPENDENT COPROPORPHYRINOGEN-III OXIDASE, MITOCHONDRIAL"/>
    <property type="match status" value="1"/>
</dbReference>
<dbReference type="Pfam" id="PF01218">
    <property type="entry name" value="Coprogen_oxidas"/>
    <property type="match status" value="1"/>
</dbReference>
<dbReference type="PIRSF" id="PIRSF000166">
    <property type="entry name" value="Coproporphyri_ox"/>
    <property type="match status" value="1"/>
</dbReference>
<dbReference type="PRINTS" id="PR00073">
    <property type="entry name" value="COPRGNOXDASE"/>
</dbReference>
<dbReference type="SUPFAM" id="SSF102886">
    <property type="entry name" value="Coproporphyrinogen III oxidase"/>
    <property type="match status" value="1"/>
</dbReference>
<dbReference type="PROSITE" id="PS01021">
    <property type="entry name" value="COPROGEN_OXIDASE"/>
    <property type="match status" value="1"/>
</dbReference>
<feature type="chain" id="PRO_1000019479" description="Oxygen-dependent coproporphyrinogen-III oxidase">
    <location>
        <begin position="1"/>
        <end position="342"/>
    </location>
</feature>
<feature type="region of interest" description="Important for dimerization" evidence="1">
    <location>
        <begin position="266"/>
        <end position="301"/>
    </location>
</feature>
<feature type="active site" description="Proton donor" evidence="1">
    <location>
        <position position="112"/>
    </location>
</feature>
<feature type="binding site" evidence="1">
    <location>
        <position position="98"/>
    </location>
    <ligand>
        <name>substrate</name>
    </ligand>
</feature>
<feature type="binding site" evidence="1">
    <location>
        <position position="102"/>
    </location>
    <ligand>
        <name>a divalent metal cation</name>
        <dbReference type="ChEBI" id="CHEBI:60240"/>
    </ligand>
</feature>
<feature type="binding site" evidence="1">
    <location>
        <position position="112"/>
    </location>
    <ligand>
        <name>a divalent metal cation</name>
        <dbReference type="ChEBI" id="CHEBI:60240"/>
    </ligand>
</feature>
<feature type="binding site" evidence="1">
    <location>
        <begin position="114"/>
        <end position="116"/>
    </location>
    <ligand>
        <name>substrate</name>
    </ligand>
</feature>
<feature type="binding site" evidence="1">
    <location>
        <position position="146"/>
    </location>
    <ligand>
        <name>a divalent metal cation</name>
        <dbReference type="ChEBI" id="CHEBI:60240"/>
    </ligand>
</feature>
<feature type="binding site" evidence="1">
    <location>
        <position position="176"/>
    </location>
    <ligand>
        <name>a divalent metal cation</name>
        <dbReference type="ChEBI" id="CHEBI:60240"/>
    </ligand>
</feature>
<feature type="site" description="Important for dimerization" evidence="1">
    <location>
        <position position="176"/>
    </location>
</feature>
<accession>Q318G0</accession>
<protein>
    <recommendedName>
        <fullName evidence="1">Oxygen-dependent coproporphyrinogen-III oxidase</fullName>
        <shortName evidence="1">CPO</shortName>
        <shortName evidence="1">Coprogen oxidase</shortName>
        <shortName evidence="1">Coproporphyrinogenase</shortName>
        <ecNumber evidence="1">1.3.3.3</ecNumber>
    </recommendedName>
</protein>